<comment type="function">
    <text evidence="1">Catalyzes the excretion of spermidine.</text>
</comment>
<comment type="subunit">
    <text evidence="1">Forms a complex with MdtI.</text>
</comment>
<comment type="subcellular location">
    <subcellularLocation>
        <location evidence="1">Cell inner membrane</location>
        <topology evidence="1">Multi-pass membrane protein</topology>
    </subcellularLocation>
</comment>
<comment type="similarity">
    <text evidence="1">Belongs to the drug/metabolite transporter (DMT) superfamily. Small multidrug resistance (SMR) (TC 2.A.7.1) family. MdtJ subfamily.</text>
</comment>
<protein>
    <recommendedName>
        <fullName evidence="1">Spermidine export protein MdtJ</fullName>
    </recommendedName>
</protein>
<dbReference type="EMBL" id="CP000720">
    <property type="protein sequence ID" value="ABS47628.1"/>
    <property type="molecule type" value="Genomic_DNA"/>
</dbReference>
<dbReference type="RefSeq" id="WP_012105125.1">
    <property type="nucleotide sequence ID" value="NC_009708.1"/>
</dbReference>
<dbReference type="SMR" id="A7FIB5"/>
<dbReference type="KEGG" id="ypi:YpsIP31758_2020"/>
<dbReference type="HOGENOM" id="CLU_133067_0_0_6"/>
<dbReference type="Proteomes" id="UP000002412">
    <property type="component" value="Chromosome"/>
</dbReference>
<dbReference type="GO" id="GO:0005886">
    <property type="term" value="C:plasma membrane"/>
    <property type="evidence" value="ECO:0007669"/>
    <property type="project" value="UniProtKB-SubCell"/>
</dbReference>
<dbReference type="GO" id="GO:0015199">
    <property type="term" value="F:amino-acid betaine transmembrane transporter activity"/>
    <property type="evidence" value="ECO:0007669"/>
    <property type="project" value="TreeGrafter"/>
</dbReference>
<dbReference type="GO" id="GO:0015297">
    <property type="term" value="F:antiporter activity"/>
    <property type="evidence" value="ECO:0007669"/>
    <property type="project" value="TreeGrafter"/>
</dbReference>
<dbReference type="GO" id="GO:0015220">
    <property type="term" value="F:choline transmembrane transporter activity"/>
    <property type="evidence" value="ECO:0007669"/>
    <property type="project" value="TreeGrafter"/>
</dbReference>
<dbReference type="GO" id="GO:0015606">
    <property type="term" value="F:spermidine transmembrane transporter activity"/>
    <property type="evidence" value="ECO:0007669"/>
    <property type="project" value="UniProtKB-UniRule"/>
</dbReference>
<dbReference type="GO" id="GO:0031460">
    <property type="term" value="P:glycine betaine transport"/>
    <property type="evidence" value="ECO:0007669"/>
    <property type="project" value="TreeGrafter"/>
</dbReference>
<dbReference type="FunFam" id="1.10.3730.20:FF:000001">
    <property type="entry name" value="Quaternary ammonium compound resistance transporter SugE"/>
    <property type="match status" value="1"/>
</dbReference>
<dbReference type="Gene3D" id="1.10.3730.20">
    <property type="match status" value="1"/>
</dbReference>
<dbReference type="HAMAP" id="MF_01598">
    <property type="entry name" value="MdtJ"/>
    <property type="match status" value="1"/>
</dbReference>
<dbReference type="InterPro" id="IPR000390">
    <property type="entry name" value="Small_drug/metabolite_transptr"/>
</dbReference>
<dbReference type="InterPro" id="IPR045324">
    <property type="entry name" value="Small_multidrug_res"/>
</dbReference>
<dbReference type="InterPro" id="IPR023740">
    <property type="entry name" value="Spermidine_export_MdtJ"/>
</dbReference>
<dbReference type="NCBIfam" id="NF007767">
    <property type="entry name" value="PRK10452.1"/>
    <property type="match status" value="1"/>
</dbReference>
<dbReference type="PANTHER" id="PTHR30561">
    <property type="entry name" value="SMR FAMILY PROTON-DEPENDENT DRUG EFFLUX TRANSPORTER SUGE"/>
    <property type="match status" value="1"/>
</dbReference>
<dbReference type="PANTHER" id="PTHR30561:SF2">
    <property type="entry name" value="SPERMIDINE EXPORT PROTEIN MDTJ"/>
    <property type="match status" value="1"/>
</dbReference>
<dbReference type="Pfam" id="PF00893">
    <property type="entry name" value="Multi_Drug_Res"/>
    <property type="match status" value="1"/>
</dbReference>
<dbReference type="SUPFAM" id="SSF103481">
    <property type="entry name" value="Multidrug resistance efflux transporter EmrE"/>
    <property type="match status" value="1"/>
</dbReference>
<sequence>MIYWIFLGLAIIAEIIGTLSMKYASVSGEMTGHIVMYFMITGSYVMLSLAVKKVALGVAYALWEGIGILIITIFSVMWFGETLSPLKIAGLVTLIGGILLVKSGTRKPKQPNRHRGNRPPSVQGLKTQTTGHHKGVAVESGEHHAAA</sequence>
<feature type="chain" id="PRO_0000331191" description="Spermidine export protein MdtJ">
    <location>
        <begin position="1"/>
        <end position="147"/>
    </location>
</feature>
<feature type="transmembrane region" description="Helical" evidence="1">
    <location>
        <begin position="1"/>
        <end position="21"/>
    </location>
</feature>
<feature type="transmembrane region" description="Helical" evidence="1">
    <location>
        <begin position="31"/>
        <end position="51"/>
    </location>
</feature>
<feature type="transmembrane region" description="Helical" evidence="1">
    <location>
        <begin position="54"/>
        <end position="74"/>
    </location>
</feature>
<feature type="transmembrane region" description="Helical" evidence="1">
    <location>
        <begin position="81"/>
        <end position="101"/>
    </location>
</feature>
<feature type="region of interest" description="Disordered" evidence="2">
    <location>
        <begin position="105"/>
        <end position="147"/>
    </location>
</feature>
<feature type="compositionally biased region" description="Basic residues" evidence="2">
    <location>
        <begin position="105"/>
        <end position="117"/>
    </location>
</feature>
<name>MDTJ_YERP3</name>
<reference key="1">
    <citation type="journal article" date="2007" name="PLoS Genet.">
        <title>The complete genome sequence of Yersinia pseudotuberculosis IP31758, the causative agent of Far East scarlet-like fever.</title>
        <authorList>
            <person name="Eppinger M."/>
            <person name="Rosovitz M.J."/>
            <person name="Fricke W.F."/>
            <person name="Rasko D.A."/>
            <person name="Kokorina G."/>
            <person name="Fayolle C."/>
            <person name="Lindler L.E."/>
            <person name="Carniel E."/>
            <person name="Ravel J."/>
        </authorList>
    </citation>
    <scope>NUCLEOTIDE SEQUENCE [LARGE SCALE GENOMIC DNA]</scope>
    <source>
        <strain>IP 31758</strain>
    </source>
</reference>
<evidence type="ECO:0000255" key="1">
    <source>
        <dbReference type="HAMAP-Rule" id="MF_01598"/>
    </source>
</evidence>
<evidence type="ECO:0000256" key="2">
    <source>
        <dbReference type="SAM" id="MobiDB-lite"/>
    </source>
</evidence>
<gene>
    <name evidence="1" type="primary">mdtJ</name>
    <name type="ordered locus">YpsIP31758_2020</name>
</gene>
<proteinExistence type="inferred from homology"/>
<keyword id="KW-0997">Cell inner membrane</keyword>
<keyword id="KW-1003">Cell membrane</keyword>
<keyword id="KW-0472">Membrane</keyword>
<keyword id="KW-0812">Transmembrane</keyword>
<keyword id="KW-1133">Transmembrane helix</keyword>
<keyword id="KW-0813">Transport</keyword>
<organism>
    <name type="scientific">Yersinia pseudotuberculosis serotype O:1b (strain IP 31758)</name>
    <dbReference type="NCBI Taxonomy" id="349747"/>
    <lineage>
        <taxon>Bacteria</taxon>
        <taxon>Pseudomonadati</taxon>
        <taxon>Pseudomonadota</taxon>
        <taxon>Gammaproteobacteria</taxon>
        <taxon>Enterobacterales</taxon>
        <taxon>Yersiniaceae</taxon>
        <taxon>Yersinia</taxon>
    </lineage>
</organism>
<accession>A7FIB5</accession>